<name>LSRA_YERPY</name>
<proteinExistence type="inferred from homology"/>
<sequence>MPHTVATPPPLLQVRGISKQFSGVVVLKSIDFTLQPGQVHALLGGNGAGKSTLMKIIAGILPPDTGVIEMNGQPCFNLTPAKAHQLGIYLVPQEPMLFANLSVQENILFRLPKHQADKKKMAQLLKNLGCHLDLSVSAGSLEVADQQLVEIMRGLMRDSRILILDEPTASLTPAETHRLFSQIRMLLQQGVGVVFISHKLPEIRQLADWVSVMRDGGIALSGATADFSTEDMIQAMTPEAQKGALTDSQKLWLELPGNRRAQSRAQSQQPVIHVHDLSGEGFAHISFHVQAGEILGLAGVVGAGRTELAETLYGLRPASTGNVILEEVNITAMKTANRLAAGLVYLPEDRQASGLYLDAPLSWNVCALAHDRQGLWTQPAQEAAVLERYRRALNIKFSHLEQPVRTLSGGNQQKLLIAKCLEANPLLLIIDEPTRGVDVSARSDIYQLIRSIAEQQVAIIFISSDLEEVVQMADRVLVMHQGEINGALSGAAMNVDTIMHMAFGEHRSVSEPQGGTASSAENKGASC</sequence>
<comment type="function">
    <text evidence="1">Part of the ABC transporter complex LsrABCD involved in autoinducer 2 (AI-2) import. Responsible for energy coupling to the transport system.</text>
</comment>
<comment type="catalytic activity">
    <reaction evidence="1">
        <text>ATP + H2O + (2R,4S)-2-methyl-2,3,3,4-tetrahydroxytetrahydrofuran-[AI-2-binding protein]Side 1 = ADP + phosphate + (2R,4S)-2-methyl-2,3,3,4-tetrahydroxytetrahydrofuranSide 2 + [AI-2-binding protein]Side 1.</text>
        <dbReference type="EC" id="7.6.2.13"/>
    </reaction>
</comment>
<comment type="subunit">
    <text evidence="1">The complex is composed of two ATP-binding proteins (LsrA), two transmembrane proteins (LsrC and LsrD) and a solute-binding protein (LsrB).</text>
</comment>
<comment type="subcellular location">
    <subcellularLocation>
        <location evidence="1">Cell inner membrane</location>
        <topology evidence="1">Peripheral membrane protein</topology>
    </subcellularLocation>
</comment>
<comment type="similarity">
    <text evidence="4">Belongs to the ABC transporter superfamily. AI-2 autoinducer porter (TC 3.A.1.2.8) family.</text>
</comment>
<evidence type="ECO:0000250" key="1">
    <source>
        <dbReference type="UniProtKB" id="P77257"/>
    </source>
</evidence>
<evidence type="ECO:0000255" key="2">
    <source>
        <dbReference type="PROSITE-ProRule" id="PRU00434"/>
    </source>
</evidence>
<evidence type="ECO:0000256" key="3">
    <source>
        <dbReference type="SAM" id="MobiDB-lite"/>
    </source>
</evidence>
<evidence type="ECO:0000305" key="4"/>
<protein>
    <recommendedName>
        <fullName evidence="1">Autoinducer 2 import ATP-binding protein LsrA</fullName>
        <shortName evidence="1">AI-2 import ATP-binding protein LsrA</shortName>
        <ecNumber evidence="1">7.6.2.13</ecNumber>
    </recommendedName>
</protein>
<gene>
    <name type="primary">lsrA</name>
    <name type="ordered locus">YPK_3650</name>
</gene>
<accession>B1JLQ0</accession>
<organism>
    <name type="scientific">Yersinia pseudotuberculosis serotype O:3 (strain YPIII)</name>
    <dbReference type="NCBI Taxonomy" id="502800"/>
    <lineage>
        <taxon>Bacteria</taxon>
        <taxon>Pseudomonadati</taxon>
        <taxon>Pseudomonadota</taxon>
        <taxon>Gammaproteobacteria</taxon>
        <taxon>Enterobacterales</taxon>
        <taxon>Yersiniaceae</taxon>
        <taxon>Yersinia</taxon>
    </lineage>
</organism>
<keyword id="KW-0067">ATP-binding</keyword>
<keyword id="KW-0997">Cell inner membrane</keyword>
<keyword id="KW-1003">Cell membrane</keyword>
<keyword id="KW-0472">Membrane</keyword>
<keyword id="KW-0547">Nucleotide-binding</keyword>
<keyword id="KW-0677">Repeat</keyword>
<keyword id="KW-1278">Translocase</keyword>
<keyword id="KW-0813">Transport</keyword>
<dbReference type="EC" id="7.6.2.13" evidence="1"/>
<dbReference type="EMBL" id="CP000950">
    <property type="protein sequence ID" value="ACA69917.1"/>
    <property type="molecule type" value="Genomic_DNA"/>
</dbReference>
<dbReference type="RefSeq" id="WP_012304622.1">
    <property type="nucleotide sequence ID" value="NZ_CP009792.1"/>
</dbReference>
<dbReference type="SMR" id="B1JLQ0"/>
<dbReference type="KEGG" id="ypy:YPK_3650"/>
<dbReference type="PATRIC" id="fig|502800.11.peg.4405"/>
<dbReference type="GO" id="GO:0005886">
    <property type="term" value="C:plasma membrane"/>
    <property type="evidence" value="ECO:0007669"/>
    <property type="project" value="UniProtKB-SubCell"/>
</dbReference>
<dbReference type="GO" id="GO:0005524">
    <property type="term" value="F:ATP binding"/>
    <property type="evidence" value="ECO:0007669"/>
    <property type="project" value="UniProtKB-KW"/>
</dbReference>
<dbReference type="GO" id="GO:0016887">
    <property type="term" value="F:ATP hydrolysis activity"/>
    <property type="evidence" value="ECO:0007669"/>
    <property type="project" value="InterPro"/>
</dbReference>
<dbReference type="CDD" id="cd03216">
    <property type="entry name" value="ABC_Carb_Monos_I"/>
    <property type="match status" value="1"/>
</dbReference>
<dbReference type="CDD" id="cd03215">
    <property type="entry name" value="ABC_Carb_Monos_II"/>
    <property type="match status" value="1"/>
</dbReference>
<dbReference type="Gene3D" id="3.40.50.300">
    <property type="entry name" value="P-loop containing nucleotide triphosphate hydrolases"/>
    <property type="match status" value="2"/>
</dbReference>
<dbReference type="InterPro" id="IPR003593">
    <property type="entry name" value="AAA+_ATPase"/>
</dbReference>
<dbReference type="InterPro" id="IPR050107">
    <property type="entry name" value="ABC_carbohydrate_import_ATPase"/>
</dbReference>
<dbReference type="InterPro" id="IPR003439">
    <property type="entry name" value="ABC_transporter-like_ATP-bd"/>
</dbReference>
<dbReference type="InterPro" id="IPR017871">
    <property type="entry name" value="ABC_transporter-like_CS"/>
</dbReference>
<dbReference type="InterPro" id="IPR027417">
    <property type="entry name" value="P-loop_NTPase"/>
</dbReference>
<dbReference type="NCBIfam" id="NF011967">
    <property type="entry name" value="PRK15439.1"/>
    <property type="match status" value="1"/>
</dbReference>
<dbReference type="PANTHER" id="PTHR43790:SF2">
    <property type="entry name" value="AUTOINDUCER 2 IMPORT ATP-BINDING PROTEIN LSRA"/>
    <property type="match status" value="1"/>
</dbReference>
<dbReference type="PANTHER" id="PTHR43790">
    <property type="entry name" value="CARBOHYDRATE TRANSPORT ATP-BINDING PROTEIN MG119-RELATED"/>
    <property type="match status" value="1"/>
</dbReference>
<dbReference type="Pfam" id="PF00005">
    <property type="entry name" value="ABC_tran"/>
    <property type="match status" value="2"/>
</dbReference>
<dbReference type="SMART" id="SM00382">
    <property type="entry name" value="AAA"/>
    <property type="match status" value="2"/>
</dbReference>
<dbReference type="SUPFAM" id="SSF52540">
    <property type="entry name" value="P-loop containing nucleoside triphosphate hydrolases"/>
    <property type="match status" value="2"/>
</dbReference>
<dbReference type="PROSITE" id="PS00211">
    <property type="entry name" value="ABC_TRANSPORTER_1"/>
    <property type="match status" value="1"/>
</dbReference>
<dbReference type="PROSITE" id="PS50893">
    <property type="entry name" value="ABC_TRANSPORTER_2"/>
    <property type="match status" value="2"/>
</dbReference>
<feature type="chain" id="PRO_0000351316" description="Autoinducer 2 import ATP-binding protein LsrA">
    <location>
        <begin position="1"/>
        <end position="527"/>
    </location>
</feature>
<feature type="domain" description="ABC transporter 1" evidence="2">
    <location>
        <begin position="12"/>
        <end position="240"/>
    </location>
</feature>
<feature type="domain" description="ABC transporter 2" evidence="2">
    <location>
        <begin position="266"/>
        <end position="506"/>
    </location>
</feature>
<feature type="region of interest" description="Disordered" evidence="3">
    <location>
        <begin position="508"/>
        <end position="527"/>
    </location>
</feature>
<feature type="compositionally biased region" description="Polar residues" evidence="3">
    <location>
        <begin position="510"/>
        <end position="521"/>
    </location>
</feature>
<feature type="binding site" evidence="2">
    <location>
        <begin position="44"/>
        <end position="51"/>
    </location>
    <ligand>
        <name>ATP</name>
        <dbReference type="ChEBI" id="CHEBI:30616"/>
    </ligand>
</feature>
<reference key="1">
    <citation type="submission" date="2008-02" db="EMBL/GenBank/DDBJ databases">
        <title>Complete sequence of Yersinia pseudotuberculosis YPIII.</title>
        <authorList>
            <consortium name="US DOE Joint Genome Institute"/>
            <person name="Copeland A."/>
            <person name="Lucas S."/>
            <person name="Lapidus A."/>
            <person name="Glavina del Rio T."/>
            <person name="Dalin E."/>
            <person name="Tice H."/>
            <person name="Bruce D."/>
            <person name="Goodwin L."/>
            <person name="Pitluck S."/>
            <person name="Munk A.C."/>
            <person name="Brettin T."/>
            <person name="Detter J.C."/>
            <person name="Han C."/>
            <person name="Tapia R."/>
            <person name="Schmutz J."/>
            <person name="Larimer F."/>
            <person name="Land M."/>
            <person name="Hauser L."/>
            <person name="Challacombe J.F."/>
            <person name="Green L."/>
            <person name="Lindler L.E."/>
            <person name="Nikolich M.P."/>
            <person name="Richardson P."/>
        </authorList>
    </citation>
    <scope>NUCLEOTIDE SEQUENCE [LARGE SCALE GENOMIC DNA]</scope>
    <source>
        <strain>YPIII</strain>
    </source>
</reference>